<sequence length="362" mass="39760">MKRTIMTNTDTFEQPNTGANEESLRMVSAAPVGNEPVSDEELRPHILEGFIGQPRLKAQLQLFLDAARKRDVPPDHILLAGPPGLGKTTLAMIVANELEVPIRVTSGPAIQHAGDLASILSSLDAGEVLFIDEIHRLPRAAEELLYIAMEDFRVDVMVGKGPGASSIPLTLPRFTVIGATTREGMLPSPLRARFGFTAHLDFYPHEELEKLIERSSAVLGIQLEDGAARQLAMRSRGTPRIANRLLRRVRDWAIVHDLESVRPDDVKEALALYQIDTEGLDRLDIAVLKAIVTNFNGGPVGLNNLAAMVGEESETVETVCEPYLVREGFLIRTPKGRVATRKAWEHLGITPDESAYDVNEMS</sequence>
<comment type="function">
    <text evidence="1">The RuvA-RuvB-RuvC complex processes Holliday junction (HJ) DNA during genetic recombination and DNA repair, while the RuvA-RuvB complex plays an important role in the rescue of blocked DNA replication forks via replication fork reversal (RFR). RuvA specifically binds to HJ cruciform DNA, conferring on it an open structure. The RuvB hexamer acts as an ATP-dependent pump, pulling dsDNA into and through the RuvAB complex. RuvB forms 2 homohexamers on either side of HJ DNA bound by 1 or 2 RuvA tetramers; 4 subunits per hexamer contact DNA at a time. Coordinated motions by a converter formed by DNA-disengaged RuvB subunits stimulates ATP hydrolysis and nucleotide exchange. Immobilization of the converter enables RuvB to convert the ATP-contained energy into a lever motion, pulling 2 nucleotides of DNA out of the RuvA tetramer per ATP hydrolyzed, thus driving DNA branch migration. The RuvB motors rotate together with the DNA substrate, which together with the progressing nucleotide cycle form the mechanistic basis for DNA recombination by continuous HJ branch migration. Branch migration allows RuvC to scan DNA until it finds its consensus sequence, where it cleaves and resolves cruciform DNA.</text>
</comment>
<comment type="catalytic activity">
    <reaction evidence="1">
        <text>ATP + H2O = ADP + phosphate + H(+)</text>
        <dbReference type="Rhea" id="RHEA:13065"/>
        <dbReference type="ChEBI" id="CHEBI:15377"/>
        <dbReference type="ChEBI" id="CHEBI:15378"/>
        <dbReference type="ChEBI" id="CHEBI:30616"/>
        <dbReference type="ChEBI" id="CHEBI:43474"/>
        <dbReference type="ChEBI" id="CHEBI:456216"/>
    </reaction>
</comment>
<comment type="subunit">
    <text evidence="1">Homohexamer. Forms an RuvA(8)-RuvB(12)-Holliday junction (HJ) complex. HJ DNA is sandwiched between 2 RuvA tetramers; dsDNA enters through RuvA and exits via RuvB. An RuvB hexamer assembles on each DNA strand where it exits the tetramer. Each RuvB hexamer is contacted by two RuvA subunits (via domain III) on 2 adjacent RuvB subunits; this complex drives branch migration. In the full resolvosome a probable DNA-RuvA(4)-RuvB(12)-RuvC(2) complex forms which resolves the HJ.</text>
</comment>
<comment type="subcellular location">
    <subcellularLocation>
        <location evidence="1">Cytoplasm</location>
    </subcellularLocation>
</comment>
<comment type="domain">
    <text evidence="1">Has 3 domains, the large (RuvB-L) and small ATPase (RuvB-S) domains and the C-terminal head (RuvB-H) domain. The head domain binds DNA, while the ATPase domains jointly bind ATP, ADP or are empty depending on the state of the subunit in the translocation cycle. During a single DNA translocation step the structure of each domain remains the same, but their relative positions change.</text>
</comment>
<comment type="similarity">
    <text evidence="1">Belongs to the RuvB family.</text>
</comment>
<proteinExistence type="inferred from homology"/>
<reference key="1">
    <citation type="submission" date="2006-12" db="EMBL/GenBank/DDBJ databases">
        <title>Bifidobacterium adolescentis complete genome sequence.</title>
        <authorList>
            <person name="Suzuki T."/>
            <person name="Tsuda Y."/>
            <person name="Kanou N."/>
            <person name="Inoue T."/>
            <person name="Kumazaki K."/>
            <person name="Nagano S."/>
            <person name="Hirai S."/>
            <person name="Tanaka K."/>
            <person name="Watanabe K."/>
        </authorList>
    </citation>
    <scope>NUCLEOTIDE SEQUENCE [LARGE SCALE GENOMIC DNA]</scope>
    <source>
        <strain>ATCC 15703 / DSM 20083 / NCTC 11814 / E194a</strain>
    </source>
</reference>
<feature type="chain" id="PRO_0000322785" description="Holliday junction branch migration complex subunit RuvB">
    <location>
        <begin position="1"/>
        <end position="362"/>
    </location>
</feature>
<feature type="region of interest" description="Disordered" evidence="2">
    <location>
        <begin position="1"/>
        <end position="20"/>
    </location>
</feature>
<feature type="region of interest" description="Large ATPase domain (RuvB-L)" evidence="1">
    <location>
        <begin position="15"/>
        <end position="203"/>
    </location>
</feature>
<feature type="region of interest" description="Small ATPAse domain (RuvB-S)" evidence="1">
    <location>
        <begin position="204"/>
        <end position="274"/>
    </location>
</feature>
<feature type="region of interest" description="Head domain (RuvB-H)" evidence="1">
    <location>
        <begin position="277"/>
        <end position="362"/>
    </location>
</feature>
<feature type="binding site" evidence="1">
    <location>
        <position position="42"/>
    </location>
    <ligand>
        <name>ATP</name>
        <dbReference type="ChEBI" id="CHEBI:30616"/>
    </ligand>
</feature>
<feature type="binding site" evidence="1">
    <location>
        <position position="43"/>
    </location>
    <ligand>
        <name>ATP</name>
        <dbReference type="ChEBI" id="CHEBI:30616"/>
    </ligand>
</feature>
<feature type="binding site" evidence="1">
    <location>
        <position position="84"/>
    </location>
    <ligand>
        <name>ATP</name>
        <dbReference type="ChEBI" id="CHEBI:30616"/>
    </ligand>
</feature>
<feature type="binding site" evidence="1">
    <location>
        <position position="87"/>
    </location>
    <ligand>
        <name>ATP</name>
        <dbReference type="ChEBI" id="CHEBI:30616"/>
    </ligand>
</feature>
<feature type="binding site" evidence="1">
    <location>
        <position position="88"/>
    </location>
    <ligand>
        <name>ATP</name>
        <dbReference type="ChEBI" id="CHEBI:30616"/>
    </ligand>
</feature>
<feature type="binding site" evidence="1">
    <location>
        <position position="88"/>
    </location>
    <ligand>
        <name>Mg(2+)</name>
        <dbReference type="ChEBI" id="CHEBI:18420"/>
    </ligand>
</feature>
<feature type="binding site" evidence="1">
    <location>
        <position position="89"/>
    </location>
    <ligand>
        <name>ATP</name>
        <dbReference type="ChEBI" id="CHEBI:30616"/>
    </ligand>
</feature>
<feature type="binding site" evidence="1">
    <location>
        <begin position="150"/>
        <end position="152"/>
    </location>
    <ligand>
        <name>ATP</name>
        <dbReference type="ChEBI" id="CHEBI:30616"/>
    </ligand>
</feature>
<feature type="binding site" evidence="1">
    <location>
        <position position="193"/>
    </location>
    <ligand>
        <name>ATP</name>
        <dbReference type="ChEBI" id="CHEBI:30616"/>
    </ligand>
</feature>
<feature type="binding site" evidence="1">
    <location>
        <position position="203"/>
    </location>
    <ligand>
        <name>ATP</name>
        <dbReference type="ChEBI" id="CHEBI:30616"/>
    </ligand>
</feature>
<feature type="binding site" evidence="1">
    <location>
        <position position="240"/>
    </location>
    <ligand>
        <name>ATP</name>
        <dbReference type="ChEBI" id="CHEBI:30616"/>
    </ligand>
</feature>
<feature type="binding site" evidence="1">
    <location>
        <position position="332"/>
    </location>
    <ligand>
        <name>DNA</name>
        <dbReference type="ChEBI" id="CHEBI:16991"/>
    </ligand>
</feature>
<feature type="binding site" evidence="1">
    <location>
        <position position="337"/>
    </location>
    <ligand>
        <name>DNA</name>
        <dbReference type="ChEBI" id="CHEBI:16991"/>
    </ligand>
</feature>
<gene>
    <name evidence="1" type="primary">ruvB</name>
    <name type="ordered locus">BAD_0805</name>
</gene>
<name>RUVB_BIFAA</name>
<dbReference type="EC" id="3.6.4.-" evidence="1"/>
<dbReference type="EMBL" id="AP009256">
    <property type="protein sequence ID" value="BAF39586.1"/>
    <property type="molecule type" value="Genomic_DNA"/>
</dbReference>
<dbReference type="RefSeq" id="WP_011743180.1">
    <property type="nucleotide sequence ID" value="NC_008618.1"/>
</dbReference>
<dbReference type="SMR" id="A1A1K3"/>
<dbReference type="STRING" id="367928.BAD_0805"/>
<dbReference type="PaxDb" id="1680-BADO_0854"/>
<dbReference type="GeneID" id="4556702"/>
<dbReference type="KEGG" id="bad:BAD_0805"/>
<dbReference type="HOGENOM" id="CLU_055599_1_0_11"/>
<dbReference type="Proteomes" id="UP000008702">
    <property type="component" value="Chromosome"/>
</dbReference>
<dbReference type="GO" id="GO:0005737">
    <property type="term" value="C:cytoplasm"/>
    <property type="evidence" value="ECO:0007669"/>
    <property type="project" value="UniProtKB-SubCell"/>
</dbReference>
<dbReference type="GO" id="GO:0048476">
    <property type="term" value="C:Holliday junction resolvase complex"/>
    <property type="evidence" value="ECO:0007669"/>
    <property type="project" value="UniProtKB-UniRule"/>
</dbReference>
<dbReference type="GO" id="GO:0005524">
    <property type="term" value="F:ATP binding"/>
    <property type="evidence" value="ECO:0007669"/>
    <property type="project" value="UniProtKB-UniRule"/>
</dbReference>
<dbReference type="GO" id="GO:0016887">
    <property type="term" value="F:ATP hydrolysis activity"/>
    <property type="evidence" value="ECO:0007669"/>
    <property type="project" value="InterPro"/>
</dbReference>
<dbReference type="GO" id="GO:0000400">
    <property type="term" value="F:four-way junction DNA binding"/>
    <property type="evidence" value="ECO:0007669"/>
    <property type="project" value="UniProtKB-UniRule"/>
</dbReference>
<dbReference type="GO" id="GO:0009378">
    <property type="term" value="F:four-way junction helicase activity"/>
    <property type="evidence" value="ECO:0007669"/>
    <property type="project" value="InterPro"/>
</dbReference>
<dbReference type="GO" id="GO:0006310">
    <property type="term" value="P:DNA recombination"/>
    <property type="evidence" value="ECO:0007669"/>
    <property type="project" value="UniProtKB-UniRule"/>
</dbReference>
<dbReference type="GO" id="GO:0006281">
    <property type="term" value="P:DNA repair"/>
    <property type="evidence" value="ECO:0007669"/>
    <property type="project" value="UniProtKB-UniRule"/>
</dbReference>
<dbReference type="CDD" id="cd00009">
    <property type="entry name" value="AAA"/>
    <property type="match status" value="1"/>
</dbReference>
<dbReference type="Gene3D" id="1.10.8.60">
    <property type="match status" value="1"/>
</dbReference>
<dbReference type="Gene3D" id="3.40.50.300">
    <property type="entry name" value="P-loop containing nucleotide triphosphate hydrolases"/>
    <property type="match status" value="1"/>
</dbReference>
<dbReference type="Gene3D" id="1.10.10.10">
    <property type="entry name" value="Winged helix-like DNA-binding domain superfamily/Winged helix DNA-binding domain"/>
    <property type="match status" value="1"/>
</dbReference>
<dbReference type="HAMAP" id="MF_00016">
    <property type="entry name" value="DNA_HJ_migration_RuvB"/>
    <property type="match status" value="1"/>
</dbReference>
<dbReference type="InterPro" id="IPR003593">
    <property type="entry name" value="AAA+_ATPase"/>
</dbReference>
<dbReference type="InterPro" id="IPR041445">
    <property type="entry name" value="AAA_lid_4"/>
</dbReference>
<dbReference type="InterPro" id="IPR004605">
    <property type="entry name" value="DNA_helicase_Holl-junc_RuvB"/>
</dbReference>
<dbReference type="InterPro" id="IPR027417">
    <property type="entry name" value="P-loop_NTPase"/>
</dbReference>
<dbReference type="InterPro" id="IPR008824">
    <property type="entry name" value="RuvB-like_N"/>
</dbReference>
<dbReference type="InterPro" id="IPR008823">
    <property type="entry name" value="RuvB_C"/>
</dbReference>
<dbReference type="InterPro" id="IPR036388">
    <property type="entry name" value="WH-like_DNA-bd_sf"/>
</dbReference>
<dbReference type="InterPro" id="IPR036390">
    <property type="entry name" value="WH_DNA-bd_sf"/>
</dbReference>
<dbReference type="NCBIfam" id="NF000868">
    <property type="entry name" value="PRK00080.1"/>
    <property type="match status" value="1"/>
</dbReference>
<dbReference type="NCBIfam" id="TIGR00635">
    <property type="entry name" value="ruvB"/>
    <property type="match status" value="1"/>
</dbReference>
<dbReference type="PANTHER" id="PTHR42848">
    <property type="match status" value="1"/>
</dbReference>
<dbReference type="PANTHER" id="PTHR42848:SF1">
    <property type="entry name" value="HOLLIDAY JUNCTION BRANCH MIGRATION COMPLEX SUBUNIT RUVB"/>
    <property type="match status" value="1"/>
</dbReference>
<dbReference type="Pfam" id="PF17864">
    <property type="entry name" value="AAA_lid_4"/>
    <property type="match status" value="1"/>
</dbReference>
<dbReference type="Pfam" id="PF05491">
    <property type="entry name" value="RuvB_C"/>
    <property type="match status" value="1"/>
</dbReference>
<dbReference type="Pfam" id="PF05496">
    <property type="entry name" value="RuvB_N"/>
    <property type="match status" value="1"/>
</dbReference>
<dbReference type="SMART" id="SM00382">
    <property type="entry name" value="AAA"/>
    <property type="match status" value="1"/>
</dbReference>
<dbReference type="SUPFAM" id="SSF52540">
    <property type="entry name" value="P-loop containing nucleoside triphosphate hydrolases"/>
    <property type="match status" value="1"/>
</dbReference>
<dbReference type="SUPFAM" id="SSF46785">
    <property type="entry name" value="Winged helix' DNA-binding domain"/>
    <property type="match status" value="1"/>
</dbReference>
<organism>
    <name type="scientific">Bifidobacterium adolescentis (strain ATCC 15703 / DSM 20083 / NCTC 11814 / E194a)</name>
    <dbReference type="NCBI Taxonomy" id="367928"/>
    <lineage>
        <taxon>Bacteria</taxon>
        <taxon>Bacillati</taxon>
        <taxon>Actinomycetota</taxon>
        <taxon>Actinomycetes</taxon>
        <taxon>Bifidobacteriales</taxon>
        <taxon>Bifidobacteriaceae</taxon>
        <taxon>Bifidobacterium</taxon>
    </lineage>
</organism>
<accession>A1A1K3</accession>
<keyword id="KW-0067">ATP-binding</keyword>
<keyword id="KW-0963">Cytoplasm</keyword>
<keyword id="KW-0227">DNA damage</keyword>
<keyword id="KW-0233">DNA recombination</keyword>
<keyword id="KW-0234">DNA repair</keyword>
<keyword id="KW-0238">DNA-binding</keyword>
<keyword id="KW-0378">Hydrolase</keyword>
<keyword id="KW-0547">Nucleotide-binding</keyword>
<keyword id="KW-1185">Reference proteome</keyword>
<evidence type="ECO:0000255" key="1">
    <source>
        <dbReference type="HAMAP-Rule" id="MF_00016"/>
    </source>
</evidence>
<evidence type="ECO:0000256" key="2">
    <source>
        <dbReference type="SAM" id="MobiDB-lite"/>
    </source>
</evidence>
<protein>
    <recommendedName>
        <fullName evidence="1">Holliday junction branch migration complex subunit RuvB</fullName>
        <ecNumber evidence="1">3.6.4.-</ecNumber>
    </recommendedName>
</protein>